<accession>C0R0E0</accession>
<gene>
    <name evidence="1" type="primary">pnp</name>
    <name type="ordered locus">BHWA1_01095</name>
</gene>
<organism>
    <name type="scientific">Brachyspira hyodysenteriae (strain ATCC 49526 / WA1)</name>
    <dbReference type="NCBI Taxonomy" id="565034"/>
    <lineage>
        <taxon>Bacteria</taxon>
        <taxon>Pseudomonadati</taxon>
        <taxon>Spirochaetota</taxon>
        <taxon>Spirochaetia</taxon>
        <taxon>Brachyspirales</taxon>
        <taxon>Brachyspiraceae</taxon>
        <taxon>Brachyspira</taxon>
    </lineage>
</organism>
<evidence type="ECO:0000255" key="1">
    <source>
        <dbReference type="HAMAP-Rule" id="MF_01595"/>
    </source>
</evidence>
<reference key="1">
    <citation type="journal article" date="2009" name="PLoS ONE">
        <title>Genome sequence of the pathogenic intestinal spirochete Brachyspira hyodysenteriae reveals adaptations to its lifestyle in the porcine large intestine.</title>
        <authorList>
            <person name="Bellgard M.I."/>
            <person name="Wanchanthuek P."/>
            <person name="La T."/>
            <person name="Ryan K."/>
            <person name="Moolhuijzen P."/>
            <person name="Albertyn Z."/>
            <person name="Shaban B."/>
            <person name="Motro Y."/>
            <person name="Dunn D.S."/>
            <person name="Schibeci D."/>
            <person name="Hunter A."/>
            <person name="Barrero R."/>
            <person name="Phillips N.D."/>
            <person name="Hampson D.J."/>
        </authorList>
    </citation>
    <scope>NUCLEOTIDE SEQUENCE [LARGE SCALE GENOMIC DNA]</scope>
    <source>
        <strain>ATCC 49526 / WA1</strain>
    </source>
</reference>
<keyword id="KW-0963">Cytoplasm</keyword>
<keyword id="KW-0460">Magnesium</keyword>
<keyword id="KW-0479">Metal-binding</keyword>
<keyword id="KW-0548">Nucleotidyltransferase</keyword>
<keyword id="KW-0694">RNA-binding</keyword>
<keyword id="KW-0808">Transferase</keyword>
<dbReference type="EC" id="2.7.7.8" evidence="1"/>
<dbReference type="EMBL" id="CP001357">
    <property type="protein sequence ID" value="ACN83578.1"/>
    <property type="molecule type" value="Genomic_DNA"/>
</dbReference>
<dbReference type="RefSeq" id="WP_012670625.1">
    <property type="nucleotide sequence ID" value="NC_012225.1"/>
</dbReference>
<dbReference type="SMR" id="C0R0E0"/>
<dbReference type="STRING" id="565034.BHWA1_01095"/>
<dbReference type="KEGG" id="bhy:BHWA1_01095"/>
<dbReference type="eggNOG" id="COG1185">
    <property type="taxonomic scope" value="Bacteria"/>
</dbReference>
<dbReference type="HOGENOM" id="CLU_004217_2_2_12"/>
<dbReference type="Proteomes" id="UP000001803">
    <property type="component" value="Chromosome"/>
</dbReference>
<dbReference type="GO" id="GO:0005829">
    <property type="term" value="C:cytosol"/>
    <property type="evidence" value="ECO:0007669"/>
    <property type="project" value="TreeGrafter"/>
</dbReference>
<dbReference type="GO" id="GO:0000175">
    <property type="term" value="F:3'-5'-RNA exonuclease activity"/>
    <property type="evidence" value="ECO:0007669"/>
    <property type="project" value="TreeGrafter"/>
</dbReference>
<dbReference type="GO" id="GO:0000287">
    <property type="term" value="F:magnesium ion binding"/>
    <property type="evidence" value="ECO:0007669"/>
    <property type="project" value="UniProtKB-UniRule"/>
</dbReference>
<dbReference type="GO" id="GO:0004654">
    <property type="term" value="F:polyribonucleotide nucleotidyltransferase activity"/>
    <property type="evidence" value="ECO:0007669"/>
    <property type="project" value="UniProtKB-UniRule"/>
</dbReference>
<dbReference type="GO" id="GO:0003723">
    <property type="term" value="F:RNA binding"/>
    <property type="evidence" value="ECO:0007669"/>
    <property type="project" value="UniProtKB-UniRule"/>
</dbReference>
<dbReference type="GO" id="GO:0006402">
    <property type="term" value="P:mRNA catabolic process"/>
    <property type="evidence" value="ECO:0007669"/>
    <property type="project" value="UniProtKB-UniRule"/>
</dbReference>
<dbReference type="GO" id="GO:0006396">
    <property type="term" value="P:RNA processing"/>
    <property type="evidence" value="ECO:0007669"/>
    <property type="project" value="InterPro"/>
</dbReference>
<dbReference type="CDD" id="cd02393">
    <property type="entry name" value="KH-I_PNPase"/>
    <property type="match status" value="1"/>
</dbReference>
<dbReference type="CDD" id="cd11363">
    <property type="entry name" value="RNase_PH_PNPase_1"/>
    <property type="match status" value="1"/>
</dbReference>
<dbReference type="CDD" id="cd11364">
    <property type="entry name" value="RNase_PH_PNPase_2"/>
    <property type="match status" value="1"/>
</dbReference>
<dbReference type="CDD" id="cd04472">
    <property type="entry name" value="S1_PNPase"/>
    <property type="match status" value="1"/>
</dbReference>
<dbReference type="FunFam" id="3.30.1370.10:FF:000001">
    <property type="entry name" value="Polyribonucleotide nucleotidyltransferase"/>
    <property type="match status" value="1"/>
</dbReference>
<dbReference type="FunFam" id="3.30.230.70:FF:000001">
    <property type="entry name" value="Polyribonucleotide nucleotidyltransferase"/>
    <property type="match status" value="1"/>
</dbReference>
<dbReference type="FunFam" id="3.30.230.70:FF:000002">
    <property type="entry name" value="Polyribonucleotide nucleotidyltransferase"/>
    <property type="match status" value="1"/>
</dbReference>
<dbReference type="Gene3D" id="3.30.230.70">
    <property type="entry name" value="GHMP Kinase, N-terminal domain"/>
    <property type="match status" value="2"/>
</dbReference>
<dbReference type="Gene3D" id="3.30.1370.10">
    <property type="entry name" value="K Homology domain, type 1"/>
    <property type="match status" value="1"/>
</dbReference>
<dbReference type="Gene3D" id="2.40.50.140">
    <property type="entry name" value="Nucleic acid-binding proteins"/>
    <property type="match status" value="1"/>
</dbReference>
<dbReference type="HAMAP" id="MF_01595">
    <property type="entry name" value="PNPase"/>
    <property type="match status" value="1"/>
</dbReference>
<dbReference type="InterPro" id="IPR001247">
    <property type="entry name" value="ExoRNase_PH_dom1"/>
</dbReference>
<dbReference type="InterPro" id="IPR015847">
    <property type="entry name" value="ExoRNase_PH_dom2"/>
</dbReference>
<dbReference type="InterPro" id="IPR036345">
    <property type="entry name" value="ExoRNase_PH_dom2_sf"/>
</dbReference>
<dbReference type="InterPro" id="IPR004087">
    <property type="entry name" value="KH_dom"/>
</dbReference>
<dbReference type="InterPro" id="IPR004088">
    <property type="entry name" value="KH_dom_type_1"/>
</dbReference>
<dbReference type="InterPro" id="IPR036612">
    <property type="entry name" value="KH_dom_type_1_sf"/>
</dbReference>
<dbReference type="InterPro" id="IPR012340">
    <property type="entry name" value="NA-bd_OB-fold"/>
</dbReference>
<dbReference type="InterPro" id="IPR012162">
    <property type="entry name" value="PNPase"/>
</dbReference>
<dbReference type="InterPro" id="IPR027408">
    <property type="entry name" value="PNPase/RNase_PH_dom_sf"/>
</dbReference>
<dbReference type="InterPro" id="IPR015848">
    <property type="entry name" value="PNPase_PH_RNA-bd_bac/org-type"/>
</dbReference>
<dbReference type="InterPro" id="IPR020568">
    <property type="entry name" value="Ribosomal_Su5_D2-typ_SF"/>
</dbReference>
<dbReference type="InterPro" id="IPR003029">
    <property type="entry name" value="S1_domain"/>
</dbReference>
<dbReference type="NCBIfam" id="TIGR03591">
    <property type="entry name" value="polynuc_phos"/>
    <property type="match status" value="1"/>
</dbReference>
<dbReference type="NCBIfam" id="NF008805">
    <property type="entry name" value="PRK11824.1"/>
    <property type="match status" value="1"/>
</dbReference>
<dbReference type="PANTHER" id="PTHR11252">
    <property type="entry name" value="POLYRIBONUCLEOTIDE NUCLEOTIDYLTRANSFERASE"/>
    <property type="match status" value="1"/>
</dbReference>
<dbReference type="PANTHER" id="PTHR11252:SF0">
    <property type="entry name" value="POLYRIBONUCLEOTIDE NUCLEOTIDYLTRANSFERASE 1, MITOCHONDRIAL"/>
    <property type="match status" value="1"/>
</dbReference>
<dbReference type="Pfam" id="PF00013">
    <property type="entry name" value="KH_1"/>
    <property type="match status" value="1"/>
</dbReference>
<dbReference type="Pfam" id="PF03726">
    <property type="entry name" value="PNPase"/>
    <property type="match status" value="1"/>
</dbReference>
<dbReference type="Pfam" id="PF01138">
    <property type="entry name" value="RNase_PH"/>
    <property type="match status" value="2"/>
</dbReference>
<dbReference type="Pfam" id="PF03725">
    <property type="entry name" value="RNase_PH_C"/>
    <property type="match status" value="2"/>
</dbReference>
<dbReference type="Pfam" id="PF00575">
    <property type="entry name" value="S1"/>
    <property type="match status" value="1"/>
</dbReference>
<dbReference type="PIRSF" id="PIRSF005499">
    <property type="entry name" value="PNPase"/>
    <property type="match status" value="1"/>
</dbReference>
<dbReference type="SMART" id="SM00322">
    <property type="entry name" value="KH"/>
    <property type="match status" value="1"/>
</dbReference>
<dbReference type="SMART" id="SM00316">
    <property type="entry name" value="S1"/>
    <property type="match status" value="1"/>
</dbReference>
<dbReference type="SUPFAM" id="SSF54791">
    <property type="entry name" value="Eukaryotic type KH-domain (KH-domain type I)"/>
    <property type="match status" value="1"/>
</dbReference>
<dbReference type="SUPFAM" id="SSF50249">
    <property type="entry name" value="Nucleic acid-binding proteins"/>
    <property type="match status" value="1"/>
</dbReference>
<dbReference type="SUPFAM" id="SSF55666">
    <property type="entry name" value="Ribonuclease PH domain 2-like"/>
    <property type="match status" value="2"/>
</dbReference>
<dbReference type="SUPFAM" id="SSF54211">
    <property type="entry name" value="Ribosomal protein S5 domain 2-like"/>
    <property type="match status" value="2"/>
</dbReference>
<dbReference type="PROSITE" id="PS50084">
    <property type="entry name" value="KH_TYPE_1"/>
    <property type="match status" value="1"/>
</dbReference>
<dbReference type="PROSITE" id="PS50126">
    <property type="entry name" value="S1"/>
    <property type="match status" value="1"/>
</dbReference>
<feature type="chain" id="PRO_0000381870" description="Polyribonucleotide nucleotidyltransferase">
    <location>
        <begin position="1"/>
        <end position="712"/>
    </location>
</feature>
<feature type="domain" description="KH" evidence="1">
    <location>
        <begin position="550"/>
        <end position="609"/>
    </location>
</feature>
<feature type="domain" description="S1 motif" evidence="1">
    <location>
        <begin position="619"/>
        <end position="686"/>
    </location>
</feature>
<feature type="binding site" evidence="1">
    <location>
        <position position="484"/>
    </location>
    <ligand>
        <name>Mg(2+)</name>
        <dbReference type="ChEBI" id="CHEBI:18420"/>
    </ligand>
</feature>
<feature type="binding site" evidence="1">
    <location>
        <position position="490"/>
    </location>
    <ligand>
        <name>Mg(2+)</name>
        <dbReference type="ChEBI" id="CHEBI:18420"/>
    </ligand>
</feature>
<protein>
    <recommendedName>
        <fullName evidence="1">Polyribonucleotide nucleotidyltransferase</fullName>
        <ecNumber evidence="1">2.7.7.8</ecNumber>
    </recommendedName>
    <alternativeName>
        <fullName evidence="1">Polynucleotide phosphorylase</fullName>
        <shortName evidence="1">PNPase</shortName>
    </alternativeName>
</protein>
<name>PNP_BRAHW</name>
<sequence>MVTVKSVFCGEELILETGLLAKQAHGSVTLRLGNTTILATVVAAKEPNLESDFFPLTVNYNEKYYAGGKIPGGFFKREAKPRDKEILISRIIDRPLRPLFPEGFRNEVQIIPTVLSVDTDMPTDALALIASSAALTISWIPFGGPVAAVRIGYKNGEYIINPKNSELSTSELDIIVAGSKDAILMIEGEAKEVSEEVFIGAIELAHKEMQKYIDMQNEMASLCGTQKIEQELFEFDADLVKMVTEYGRDKIESANYNPDKTKRNESMDNAFNEIEEYIKTKVEDEKLISQVKGICHSIEEEIVREAIVEKCMRPDGRALDEIRPITTMTNLIPRVHGSALFTRGQTQCLSIVTLGSEKDAQLMDDIYGKENKTFMLHYNFPPFSVGEVGRYGAPGRREIGHGNLAERSFNAVLPPKDKFPYTIRVVAEILESNGSSSMATICASTMSLLSAGVPLNASVAGIAMGLATYKDGYKILTDIQGVEDHLGDMDFKVAGTRKGITAFQLDIKLTGISAQILKEALEQAKKARYFILDKIDATIANAGEISDFAPKYKTMDVNPEKIRVLIGPGGKNIKAIIEETGSDVEIQDSGVVNIFAPDTPTLDKTIKLINSYVKDPEVGEVYDGIVKDIKDFGAFVEILPGVEGLCHISELAYKHVMNVEEVLKIGDEVKVKILDVKGGKYSLSRKALLEKPADYVEEEYNKKEKKHGKKRF</sequence>
<comment type="function">
    <text evidence="1">Involved in mRNA degradation. Catalyzes the phosphorolysis of single-stranded polyribonucleotides processively in the 3'- to 5'-direction.</text>
</comment>
<comment type="catalytic activity">
    <reaction evidence="1">
        <text>RNA(n+1) + phosphate = RNA(n) + a ribonucleoside 5'-diphosphate</text>
        <dbReference type="Rhea" id="RHEA:22096"/>
        <dbReference type="Rhea" id="RHEA-COMP:14527"/>
        <dbReference type="Rhea" id="RHEA-COMP:17342"/>
        <dbReference type="ChEBI" id="CHEBI:43474"/>
        <dbReference type="ChEBI" id="CHEBI:57930"/>
        <dbReference type="ChEBI" id="CHEBI:140395"/>
        <dbReference type="EC" id="2.7.7.8"/>
    </reaction>
</comment>
<comment type="cofactor">
    <cofactor evidence="1">
        <name>Mg(2+)</name>
        <dbReference type="ChEBI" id="CHEBI:18420"/>
    </cofactor>
</comment>
<comment type="subcellular location">
    <subcellularLocation>
        <location evidence="1">Cytoplasm</location>
    </subcellularLocation>
</comment>
<comment type="similarity">
    <text evidence="1">Belongs to the polyribonucleotide nucleotidyltransferase family.</text>
</comment>
<proteinExistence type="inferred from homology"/>